<evidence type="ECO:0000250" key="1"/>
<evidence type="ECO:0000255" key="2">
    <source>
        <dbReference type="PROSITE-ProRule" id="PRU00091"/>
    </source>
</evidence>
<evidence type="ECO:0000256" key="3">
    <source>
        <dbReference type="SAM" id="MobiDB-lite"/>
    </source>
</evidence>
<evidence type="ECO:0000305" key="4"/>
<organism>
    <name type="scientific">Anopheles gambiae</name>
    <name type="common">African malaria mosquito</name>
    <dbReference type="NCBI Taxonomy" id="7165"/>
    <lineage>
        <taxon>Eukaryota</taxon>
        <taxon>Metazoa</taxon>
        <taxon>Ecdysozoa</taxon>
        <taxon>Arthropoda</taxon>
        <taxon>Hexapoda</taxon>
        <taxon>Insecta</taxon>
        <taxon>Pterygota</taxon>
        <taxon>Neoptera</taxon>
        <taxon>Endopterygota</taxon>
        <taxon>Diptera</taxon>
        <taxon>Nematocera</taxon>
        <taxon>Culicoidea</taxon>
        <taxon>Culicidae</taxon>
        <taxon>Anophelinae</taxon>
        <taxon>Anopheles</taxon>
    </lineage>
</organism>
<gene>
    <name type="ORF">AGAP003678</name>
</gene>
<dbReference type="EMBL" id="AAAB01008888">
    <property type="protein sequence ID" value="EAA08780.5"/>
    <property type="molecule type" value="Genomic_DNA"/>
</dbReference>
<dbReference type="RefSeq" id="XP_313459.5">
    <property type="nucleotide sequence ID" value="XM_313459.5"/>
</dbReference>
<dbReference type="SMR" id="Q7QAJ2"/>
<dbReference type="FunCoup" id="Q7QAJ2">
    <property type="interactions" value="201"/>
</dbReference>
<dbReference type="PaxDb" id="7165-AGAP003678-PA"/>
<dbReference type="VEuPathDB" id="VectorBase:AGAMI1_004985"/>
<dbReference type="VEuPathDB" id="VectorBase:AGAP003678"/>
<dbReference type="eggNOG" id="KOG1819">
    <property type="taxonomic scope" value="Eukaryota"/>
</dbReference>
<dbReference type="HOGENOM" id="CLU_007360_1_1_1"/>
<dbReference type="InParanoid" id="Q7QAJ2"/>
<dbReference type="OMA" id="CYVREVQ"/>
<dbReference type="PhylomeDB" id="Q7QAJ2"/>
<dbReference type="Proteomes" id="UP000007062">
    <property type="component" value="Chromosome 2R"/>
</dbReference>
<dbReference type="GO" id="GO:0031901">
    <property type="term" value="C:early endosome membrane"/>
    <property type="evidence" value="ECO:0000318"/>
    <property type="project" value="GO_Central"/>
</dbReference>
<dbReference type="GO" id="GO:0008270">
    <property type="term" value="F:zinc ion binding"/>
    <property type="evidence" value="ECO:0007669"/>
    <property type="project" value="UniProtKB-KW"/>
</dbReference>
<dbReference type="GO" id="GO:0042059">
    <property type="term" value="P:negative regulation of epidermal growth factor receptor signaling pathway"/>
    <property type="evidence" value="ECO:0000318"/>
    <property type="project" value="GO_Central"/>
</dbReference>
<dbReference type="CDD" id="cd15731">
    <property type="entry name" value="FYVE_LST2"/>
    <property type="match status" value="1"/>
</dbReference>
<dbReference type="FunFam" id="3.30.40.10:FF:000073">
    <property type="entry name" value="myotubularin-related protein 4 isoform X2"/>
    <property type="match status" value="1"/>
</dbReference>
<dbReference type="Gene3D" id="3.30.40.10">
    <property type="entry name" value="Zinc/RING finger domain, C3HC4 (zinc finger)"/>
    <property type="match status" value="1"/>
</dbReference>
<dbReference type="InterPro" id="IPR043269">
    <property type="entry name" value="FYVE_LST2"/>
</dbReference>
<dbReference type="InterPro" id="IPR051118">
    <property type="entry name" value="LST-2"/>
</dbReference>
<dbReference type="InterPro" id="IPR000306">
    <property type="entry name" value="Znf_FYVE"/>
</dbReference>
<dbReference type="InterPro" id="IPR017455">
    <property type="entry name" value="Znf_FYVE-rel"/>
</dbReference>
<dbReference type="InterPro" id="IPR011011">
    <property type="entry name" value="Znf_FYVE_PHD"/>
</dbReference>
<dbReference type="InterPro" id="IPR013083">
    <property type="entry name" value="Znf_RING/FYVE/PHD"/>
</dbReference>
<dbReference type="PANTHER" id="PTHR46465">
    <property type="entry name" value="LATERAL SIGNALING TARGET PROTEIN 2 HOMOLOG"/>
    <property type="match status" value="1"/>
</dbReference>
<dbReference type="PANTHER" id="PTHR46465:SF2">
    <property type="entry name" value="LATERAL SIGNALING TARGET PROTEIN 2 HOMOLOG"/>
    <property type="match status" value="1"/>
</dbReference>
<dbReference type="Pfam" id="PF01363">
    <property type="entry name" value="FYVE"/>
    <property type="match status" value="1"/>
</dbReference>
<dbReference type="SMART" id="SM00064">
    <property type="entry name" value="FYVE"/>
    <property type="match status" value="1"/>
</dbReference>
<dbReference type="SUPFAM" id="SSF57903">
    <property type="entry name" value="FYVE/PHD zinc finger"/>
    <property type="match status" value="1"/>
</dbReference>
<dbReference type="PROSITE" id="PS50178">
    <property type="entry name" value="ZF_FYVE"/>
    <property type="match status" value="1"/>
</dbReference>
<accession>Q7QAJ2</accession>
<reference key="1">
    <citation type="journal article" date="2002" name="Science">
        <title>The genome sequence of the malaria mosquito Anopheles gambiae.</title>
        <authorList>
            <person name="Holt R.A."/>
            <person name="Subramanian G.M."/>
            <person name="Halpern A."/>
            <person name="Sutton G.G."/>
            <person name="Charlab R."/>
            <person name="Nusskern D.R."/>
            <person name="Wincker P."/>
            <person name="Clark A.G."/>
            <person name="Ribeiro J.M.C."/>
            <person name="Wides R."/>
            <person name="Salzberg S.L."/>
            <person name="Loftus B.J."/>
            <person name="Yandell M.D."/>
            <person name="Majoros W.H."/>
            <person name="Rusch D.B."/>
            <person name="Lai Z."/>
            <person name="Kraft C.L."/>
            <person name="Abril J.F."/>
            <person name="Anthouard V."/>
            <person name="Arensburger P."/>
            <person name="Atkinson P.W."/>
            <person name="Baden H."/>
            <person name="de Berardinis V."/>
            <person name="Baldwin D."/>
            <person name="Benes V."/>
            <person name="Biedler J."/>
            <person name="Blass C."/>
            <person name="Bolanos R."/>
            <person name="Boscus D."/>
            <person name="Barnstead M."/>
            <person name="Cai S."/>
            <person name="Center A."/>
            <person name="Chaturverdi K."/>
            <person name="Christophides G.K."/>
            <person name="Chrystal M.A.M."/>
            <person name="Clamp M."/>
            <person name="Cravchik A."/>
            <person name="Curwen V."/>
            <person name="Dana A."/>
            <person name="Delcher A."/>
            <person name="Dew I."/>
            <person name="Evans C.A."/>
            <person name="Flanigan M."/>
            <person name="Grundschober-Freimoser A."/>
            <person name="Friedli L."/>
            <person name="Gu Z."/>
            <person name="Guan P."/>
            <person name="Guigo R."/>
            <person name="Hillenmeyer M.E."/>
            <person name="Hladun S.L."/>
            <person name="Hogan J.R."/>
            <person name="Hong Y.S."/>
            <person name="Hoover J."/>
            <person name="Jaillon O."/>
            <person name="Ke Z."/>
            <person name="Kodira C.D."/>
            <person name="Kokoza E."/>
            <person name="Koutsos A."/>
            <person name="Letunic I."/>
            <person name="Levitsky A.A."/>
            <person name="Liang Y."/>
            <person name="Lin J.-J."/>
            <person name="Lobo N.F."/>
            <person name="Lopez J.R."/>
            <person name="Malek J.A."/>
            <person name="McIntosh T.C."/>
            <person name="Meister S."/>
            <person name="Miller J.R."/>
            <person name="Mobarry C."/>
            <person name="Mongin E."/>
            <person name="Murphy S.D."/>
            <person name="O'Brochta D.A."/>
            <person name="Pfannkoch C."/>
            <person name="Qi R."/>
            <person name="Regier M.A."/>
            <person name="Remington K."/>
            <person name="Shao H."/>
            <person name="Sharakhova M.V."/>
            <person name="Sitter C.D."/>
            <person name="Shetty J."/>
            <person name="Smith T.J."/>
            <person name="Strong R."/>
            <person name="Sun J."/>
            <person name="Thomasova D."/>
            <person name="Ton L.Q."/>
            <person name="Topalis P."/>
            <person name="Tu Z.J."/>
            <person name="Unger M.F."/>
            <person name="Walenz B."/>
            <person name="Wang A.H."/>
            <person name="Wang J."/>
            <person name="Wang M."/>
            <person name="Wang X."/>
            <person name="Woodford K.J."/>
            <person name="Wortman J.R."/>
            <person name="Wu M."/>
            <person name="Yao A."/>
            <person name="Zdobnov E.M."/>
            <person name="Zhang H."/>
            <person name="Zhao Q."/>
            <person name="Zhao S."/>
            <person name="Zhu S.C."/>
            <person name="Zhimulev I."/>
            <person name="Coluzzi M."/>
            <person name="della Torre A."/>
            <person name="Roth C.W."/>
            <person name="Louis C."/>
            <person name="Kalush F."/>
            <person name="Mural R.J."/>
            <person name="Myers E.W."/>
            <person name="Adams M.D."/>
            <person name="Smith H.O."/>
            <person name="Broder S."/>
            <person name="Gardner M.J."/>
            <person name="Fraser C.M."/>
            <person name="Birney E."/>
            <person name="Bork P."/>
            <person name="Brey P.T."/>
            <person name="Venter J.C."/>
            <person name="Weissenbach J."/>
            <person name="Kafatos F.C."/>
            <person name="Collins F.H."/>
            <person name="Hoffman S.L."/>
        </authorList>
    </citation>
    <scope>NUCLEOTIDE SEQUENCE [LARGE SCALE GENOMIC DNA]</scope>
    <source>
        <strain>PEST</strain>
    </source>
</reference>
<sequence>MVTTIVIACTFRAGTTHHSWCAAVALRAGSFAADDKSLLARFYHADRALTAIASELDSFDGRAEPVRCTRLVSRLRQGQDRVLAITNQIMDELLGDDRAQRAFRVKFPEEVLQESLAGQLWFGAECLAAGSSILNREAESAKMRPLAKAVTKSLEIVRNRLREQCLRNNTPNSPTLRLDINDAATEQLYESLKIFDRLFAEFELVYVSAMVQVKTKQEYEMQELICVLFSETLQRALKTGLLEQEQVDSYDPALMFSIPRLAIIAGLVIFREGPLNMDQPADNISEMFRPFRKLLIKMRDLLHALTKQELYQLEKLLCTNEEISASEQLICDEKGRSGGDGGSGSGGTAAAGVKEFDALEPVGESQEHVVIVTTVTTTNAPNVVGDGPGATGCTDATSGADGRLHIVSQGYGVSTGATGSSGFGSGRGGCSSSSTSRPKQRHNQAHLRQRGAPRHSSQSFAPEASYAGDDREPVVEEDNNNHLRKEIEEEDVDDDMEEEEEDEEEDEVDDDAMLKDGLVTTDCASGYLIPNTNFGNLLQTNEAPLTDSFIATDDELRLLGAETASSPPAMTQANIDSILAASAAGSGGQQQQQQQQQLIDSDSGHGTANHSTDMSPELETERTVVAAGQPNANDAPLDGSVSKQQPVRDRSRSGSSTVHKHAEISESSSDYEEADVDDEPDDVDADDDDEEEDDVVGEVEEQNDSEPTFNRKVGGAPKEAFRSQLRCKAARNHRKSSHHRPRPSTSSSSSSAAYRNKSQSHQHHHHHHHHHHHSYAESAEGTSSVVSTITTSNNSTSNGSTRHHSRMQQQHQQHQQQRNSSSSCDTSPTQSECSDAQEVALAIRAAGRNKFKSTENLLHRLFVCIAGVADQLQTNFAADLRKMLRSVFIMNSSPPEPDEPPEPSGSEEESKDSQHNHPSDLFEFRASEQDVITADQQNHSGGSSQSIYSAEEANPEQDSVFGSSGDSSPVRRTASVESRNVTVNVSVSVVASSPVGAGGAGGGGMVGGSRTGQERSVSLSEACIVVEGGKASAGGGGGTRRHSASGSKNDYGRSRSSPSSPVNSNTGGGGGGNHHSSAHHTAHEQQRRMPEEPPRWIPDCDAPRCMACASAFTPFRRRHHCRNCGGVFCGVCSNLSKPLPKYGLTKAVRVCRDCYIHEVGV</sequence>
<name>LST2_ANOGA</name>
<protein>
    <recommendedName>
        <fullName>Lateral signaling target protein 2 homolog</fullName>
    </recommendedName>
</protein>
<feature type="chain" id="PRO_0000378959" description="Lateral signaling target protein 2 homolog">
    <location>
        <begin position="1"/>
        <end position="1161"/>
    </location>
</feature>
<feature type="zinc finger region" description="FYVE-type" evidence="2">
    <location>
        <begin position="1099"/>
        <end position="1159"/>
    </location>
</feature>
<feature type="region of interest" description="Disordered" evidence="3">
    <location>
        <begin position="417"/>
        <end position="510"/>
    </location>
</feature>
<feature type="region of interest" description="Disordered" evidence="3">
    <location>
        <begin position="583"/>
        <end position="831"/>
    </location>
</feature>
<feature type="region of interest" description="Disordered" evidence="3">
    <location>
        <begin position="890"/>
        <end position="918"/>
    </location>
</feature>
<feature type="region of interest" description="Disordered" evidence="3">
    <location>
        <begin position="935"/>
        <end position="978"/>
    </location>
</feature>
<feature type="region of interest" description="Disordered" evidence="3">
    <location>
        <begin position="992"/>
        <end position="1014"/>
    </location>
</feature>
<feature type="region of interest" description="Disordered" evidence="3">
    <location>
        <begin position="1029"/>
        <end position="1095"/>
    </location>
</feature>
<feature type="compositionally biased region" description="Gly residues" evidence="3">
    <location>
        <begin position="419"/>
        <end position="429"/>
    </location>
</feature>
<feature type="compositionally biased region" description="Basic residues" evidence="3">
    <location>
        <begin position="438"/>
        <end position="453"/>
    </location>
</feature>
<feature type="compositionally biased region" description="Basic and acidic residues" evidence="3">
    <location>
        <begin position="468"/>
        <end position="487"/>
    </location>
</feature>
<feature type="compositionally biased region" description="Acidic residues" evidence="3">
    <location>
        <begin position="488"/>
        <end position="510"/>
    </location>
</feature>
<feature type="compositionally biased region" description="Low complexity" evidence="3">
    <location>
        <begin position="583"/>
        <end position="601"/>
    </location>
</feature>
<feature type="compositionally biased region" description="Acidic residues" evidence="3">
    <location>
        <begin position="669"/>
        <end position="704"/>
    </location>
</feature>
<feature type="compositionally biased region" description="Basic residues" evidence="3">
    <location>
        <begin position="728"/>
        <end position="742"/>
    </location>
</feature>
<feature type="compositionally biased region" description="Low complexity" evidence="3">
    <location>
        <begin position="743"/>
        <end position="757"/>
    </location>
</feature>
<feature type="compositionally biased region" description="Basic residues" evidence="3">
    <location>
        <begin position="758"/>
        <end position="773"/>
    </location>
</feature>
<feature type="compositionally biased region" description="Low complexity" evidence="3">
    <location>
        <begin position="781"/>
        <end position="800"/>
    </location>
</feature>
<feature type="compositionally biased region" description="Low complexity" evidence="3">
    <location>
        <begin position="807"/>
        <end position="831"/>
    </location>
</feature>
<feature type="compositionally biased region" description="Acidic residues" evidence="3">
    <location>
        <begin position="896"/>
        <end position="910"/>
    </location>
</feature>
<feature type="compositionally biased region" description="Polar residues" evidence="3">
    <location>
        <begin position="935"/>
        <end position="948"/>
    </location>
</feature>
<feature type="compositionally biased region" description="Polar residues" evidence="3">
    <location>
        <begin position="956"/>
        <end position="967"/>
    </location>
</feature>
<feature type="compositionally biased region" description="Gly residues" evidence="3">
    <location>
        <begin position="996"/>
        <end position="1010"/>
    </location>
</feature>
<feature type="compositionally biased region" description="Low complexity" evidence="3">
    <location>
        <begin position="1054"/>
        <end position="1065"/>
    </location>
</feature>
<feature type="compositionally biased region" description="Basic and acidic residues" evidence="3">
    <location>
        <begin position="1081"/>
        <end position="1094"/>
    </location>
</feature>
<feature type="binding site" evidence="2">
    <location>
        <position position="1105"/>
    </location>
    <ligand>
        <name>Zn(2+)</name>
        <dbReference type="ChEBI" id="CHEBI:29105"/>
        <label>1</label>
    </ligand>
</feature>
<feature type="binding site" evidence="2">
    <location>
        <position position="1108"/>
    </location>
    <ligand>
        <name>Zn(2+)</name>
        <dbReference type="ChEBI" id="CHEBI:29105"/>
        <label>1</label>
    </ligand>
</feature>
<feature type="binding site" evidence="2">
    <location>
        <position position="1121"/>
    </location>
    <ligand>
        <name>Zn(2+)</name>
        <dbReference type="ChEBI" id="CHEBI:29105"/>
        <label>2</label>
    </ligand>
</feature>
<feature type="binding site" evidence="2">
    <location>
        <position position="1124"/>
    </location>
    <ligand>
        <name>Zn(2+)</name>
        <dbReference type="ChEBI" id="CHEBI:29105"/>
        <label>2</label>
    </ligand>
</feature>
<feature type="binding site" evidence="2">
    <location>
        <position position="1129"/>
    </location>
    <ligand>
        <name>Zn(2+)</name>
        <dbReference type="ChEBI" id="CHEBI:29105"/>
        <label>1</label>
    </ligand>
</feature>
<feature type="binding site" evidence="2">
    <location>
        <position position="1132"/>
    </location>
    <ligand>
        <name>Zn(2+)</name>
        <dbReference type="ChEBI" id="CHEBI:29105"/>
        <label>1</label>
    </ligand>
</feature>
<feature type="binding site" evidence="2">
    <location>
        <position position="1151"/>
    </location>
    <ligand>
        <name>Zn(2+)</name>
        <dbReference type="ChEBI" id="CHEBI:29105"/>
        <label>2</label>
    </ligand>
</feature>
<feature type="binding site" evidence="2">
    <location>
        <position position="1154"/>
    </location>
    <ligand>
        <name>Zn(2+)</name>
        <dbReference type="ChEBI" id="CHEBI:29105"/>
        <label>2</label>
    </ligand>
</feature>
<comment type="function">
    <text evidence="1">Negative regulator of epidermal growth factor receptor (EGFR) signaling.</text>
</comment>
<comment type="similarity">
    <text evidence="4">Belongs to the lst-2 family.</text>
</comment>
<proteinExistence type="inferred from homology"/>
<keyword id="KW-0479">Metal-binding</keyword>
<keyword id="KW-1185">Reference proteome</keyword>
<keyword id="KW-0862">Zinc</keyword>
<keyword id="KW-0863">Zinc-finger</keyword>